<evidence type="ECO:0000250" key="1">
    <source>
        <dbReference type="UniProtKB" id="Q6NT76"/>
    </source>
</evidence>
<evidence type="ECO:0000255" key="2">
    <source>
        <dbReference type="PROSITE-ProRule" id="PRU00108"/>
    </source>
</evidence>
<evidence type="ECO:0000255" key="3">
    <source>
        <dbReference type="PROSITE-ProRule" id="PRU01285"/>
    </source>
</evidence>
<evidence type="ECO:0000255" key="4">
    <source>
        <dbReference type="PROSITE-ProRule" id="PRU01286"/>
    </source>
</evidence>
<evidence type="ECO:0000256" key="5">
    <source>
        <dbReference type="SAM" id="MobiDB-lite"/>
    </source>
</evidence>
<evidence type="ECO:0000269" key="6">
    <source>
    </source>
</evidence>
<evidence type="ECO:0000303" key="7">
    <source>
    </source>
</evidence>
<evidence type="ECO:0000305" key="8"/>
<evidence type="ECO:0000305" key="9">
    <source>
    </source>
</evidence>
<evidence type="ECO:0000312" key="10">
    <source>
        <dbReference type="Proteomes" id="UP000001940"/>
    </source>
</evidence>
<evidence type="ECO:0000312" key="11">
    <source>
        <dbReference type="WormBase" id="F54A5.1"/>
    </source>
</evidence>
<gene>
    <name evidence="7 11" type="primary">hmbx-1</name>
    <name evidence="11" type="ORF">F54A5.1</name>
</gene>
<proteinExistence type="evidence at protein level"/>
<accession>Q9TYT0</accession>
<sequence length="424" mass="47026">MLFTIEQLELIKKLQHTGMSSDQLLKAFGELEVPEQLQNNNTIAAALYSPLLVQHLTTPKSETPVKLTVQTVPTPVKSEPQSSNCSSPFEHPICSNAPRPIRSQRTPMKEITTLDDPNELEEFMKQGEEACILDMKTFITQYSLRQTTVAMMTGVSQPYISKLLNGNHRELSLRCRKNIYCWYLNCRRHPNKLAAFLADPTTRLETNGDGELIPQRRERYVFRPILIRMLESFFTQTPFPDLPRRVEIANACNHVLKMDKKGVGLMPKEVVSPQVVSNWFANKRKELRRRSAEASAASTSSASSSASSTANHDSVSVSSMSPRDEETSSRNTTPETAISPSPAVSTFEVSRPSAIISATSSTTSPISIPATIIPSVSPSALELFAMAQQLGVQLPVPFPTLPTHFFPFQMAPFYGNPASILKSE</sequence>
<dbReference type="EMBL" id="BX284601">
    <property type="protein sequence ID" value="CCD68059.1"/>
    <property type="molecule type" value="Genomic_DNA"/>
</dbReference>
<dbReference type="PIR" id="C87723">
    <property type="entry name" value="C87723"/>
</dbReference>
<dbReference type="PIR" id="T32913">
    <property type="entry name" value="T32913"/>
</dbReference>
<dbReference type="PIR" id="T33839">
    <property type="entry name" value="T33839"/>
</dbReference>
<dbReference type="RefSeq" id="NP_001370599.1">
    <property type="nucleotide sequence ID" value="NM_001383445.2"/>
</dbReference>
<dbReference type="RefSeq" id="NP_490803.1">
    <property type="nucleotide sequence ID" value="NM_058402.5"/>
</dbReference>
<dbReference type="SMR" id="Q9TYT0"/>
<dbReference type="DIP" id="DIP-27471N"/>
<dbReference type="FunCoup" id="Q9TYT0">
    <property type="interactions" value="2303"/>
</dbReference>
<dbReference type="IntAct" id="Q9TYT0">
    <property type="interactions" value="4"/>
</dbReference>
<dbReference type="STRING" id="6239.F54A5.1.1"/>
<dbReference type="PaxDb" id="6239-F54A5.1"/>
<dbReference type="EnsemblMetazoa" id="F54A5.1.1">
    <property type="protein sequence ID" value="F54A5.1.1"/>
    <property type="gene ID" value="WBGene00018786"/>
</dbReference>
<dbReference type="GeneID" id="171679"/>
<dbReference type="UCSC" id="F54A5.1">
    <property type="organism name" value="c. elegans"/>
</dbReference>
<dbReference type="AGR" id="WB:WBGene00018786"/>
<dbReference type="WormBase" id="F54A5.1">
    <property type="protein sequence ID" value="CE20859"/>
    <property type="gene ID" value="WBGene00018786"/>
    <property type="gene designation" value="hmbx-1"/>
</dbReference>
<dbReference type="eggNOG" id="ENOG502QQSR">
    <property type="taxonomic scope" value="Eukaryota"/>
</dbReference>
<dbReference type="GeneTree" id="ENSGT00940000154928"/>
<dbReference type="HOGENOM" id="CLU_650902_0_0_1"/>
<dbReference type="InParanoid" id="Q9TYT0"/>
<dbReference type="OMA" id="FEHPICS"/>
<dbReference type="OrthoDB" id="5856131at2759"/>
<dbReference type="PhylomeDB" id="Q9TYT0"/>
<dbReference type="PRO" id="PR:Q9TYT0"/>
<dbReference type="Proteomes" id="UP000001940">
    <property type="component" value="Chromosome I"/>
</dbReference>
<dbReference type="Bgee" id="WBGene00018786">
    <property type="expression patterns" value="Expressed in embryo and 3 other cell types or tissues"/>
</dbReference>
<dbReference type="GO" id="GO:0005634">
    <property type="term" value="C:nucleus"/>
    <property type="evidence" value="ECO:0000314"/>
    <property type="project" value="WormBase"/>
</dbReference>
<dbReference type="GO" id="GO:0003691">
    <property type="term" value="F:double-stranded telomeric DNA binding"/>
    <property type="evidence" value="ECO:0007669"/>
    <property type="project" value="InterPro"/>
</dbReference>
<dbReference type="GO" id="GO:0045893">
    <property type="term" value="P:positive regulation of DNA-templated transcription"/>
    <property type="evidence" value="ECO:0007669"/>
    <property type="project" value="InterPro"/>
</dbReference>
<dbReference type="CDD" id="cd00086">
    <property type="entry name" value="homeodomain"/>
    <property type="match status" value="1"/>
</dbReference>
<dbReference type="FunFam" id="1.10.260.40:FF:000044">
    <property type="entry name" value="Homeobox domain-containing protein"/>
    <property type="match status" value="1"/>
</dbReference>
<dbReference type="FunFam" id="1.10.10.60:FF:000550">
    <property type="entry name" value="Homeobox domaincontaining protein"/>
    <property type="match status" value="1"/>
</dbReference>
<dbReference type="Gene3D" id="1.10.10.60">
    <property type="entry name" value="Homeodomain-like"/>
    <property type="match status" value="1"/>
</dbReference>
<dbReference type="Gene3D" id="1.10.260.40">
    <property type="entry name" value="lambda repressor-like DNA-binding domains"/>
    <property type="match status" value="1"/>
</dbReference>
<dbReference type="InterPro" id="IPR001356">
    <property type="entry name" value="HD"/>
</dbReference>
<dbReference type="InterPro" id="IPR040363">
    <property type="entry name" value="HMBOX1"/>
</dbReference>
<dbReference type="InterPro" id="IPR006899">
    <property type="entry name" value="HNF-1_N"/>
</dbReference>
<dbReference type="InterPro" id="IPR044869">
    <property type="entry name" value="HNF-1_POU"/>
</dbReference>
<dbReference type="InterPro" id="IPR044866">
    <property type="entry name" value="HNF_P1"/>
</dbReference>
<dbReference type="InterPro" id="IPR009057">
    <property type="entry name" value="Homeodomain-like_sf"/>
</dbReference>
<dbReference type="InterPro" id="IPR010982">
    <property type="entry name" value="Lambda_DNA-bd_dom_sf"/>
</dbReference>
<dbReference type="PANTHER" id="PTHR14618:SF0">
    <property type="entry name" value="HOMEOBOX-CONTAINING PROTEIN 1"/>
    <property type="match status" value="1"/>
</dbReference>
<dbReference type="PANTHER" id="PTHR14618">
    <property type="entry name" value="HOMEODOX-CONTAINING PROTEIN 1 HMBOX1"/>
    <property type="match status" value="1"/>
</dbReference>
<dbReference type="Pfam" id="PF04814">
    <property type="entry name" value="HNF-1_N"/>
    <property type="match status" value="1"/>
</dbReference>
<dbReference type="Pfam" id="PF00046">
    <property type="entry name" value="Homeodomain"/>
    <property type="match status" value="1"/>
</dbReference>
<dbReference type="SMART" id="SM00389">
    <property type="entry name" value="HOX"/>
    <property type="match status" value="1"/>
</dbReference>
<dbReference type="SUPFAM" id="SSF46689">
    <property type="entry name" value="Homeodomain-like"/>
    <property type="match status" value="1"/>
</dbReference>
<dbReference type="SUPFAM" id="SSF47413">
    <property type="entry name" value="lambda repressor-like DNA-binding domains"/>
    <property type="match status" value="1"/>
</dbReference>
<dbReference type="PROSITE" id="PS51937">
    <property type="entry name" value="HNF_P1"/>
    <property type="match status" value="1"/>
</dbReference>
<dbReference type="PROSITE" id="PS50071">
    <property type="entry name" value="HOMEOBOX_2"/>
    <property type="match status" value="1"/>
</dbReference>
<dbReference type="PROSITE" id="PS51936">
    <property type="entry name" value="POU_4"/>
    <property type="match status" value="1"/>
</dbReference>
<keyword id="KW-0238">DNA-binding</keyword>
<keyword id="KW-0371">Homeobox</keyword>
<keyword id="KW-0539">Nucleus</keyword>
<keyword id="KW-1185">Reference proteome</keyword>
<keyword id="KW-0678">Repressor</keyword>
<keyword id="KW-0804">Transcription</keyword>
<keyword id="KW-0805">Transcription regulation</keyword>
<organism evidence="10">
    <name type="scientific">Caenorhabditis elegans</name>
    <dbReference type="NCBI Taxonomy" id="6239"/>
    <lineage>
        <taxon>Eukaryota</taxon>
        <taxon>Metazoa</taxon>
        <taxon>Ecdysozoa</taxon>
        <taxon>Nematoda</taxon>
        <taxon>Chromadorea</taxon>
        <taxon>Rhabditida</taxon>
        <taxon>Rhabditina</taxon>
        <taxon>Rhabditomorpha</taxon>
        <taxon>Rhabditoidea</taxon>
        <taxon>Rhabditidae</taxon>
        <taxon>Peloderinae</taxon>
        <taxon>Caenorhabditis</taxon>
    </lineage>
</organism>
<reference evidence="10" key="1">
    <citation type="journal article" date="1998" name="Science">
        <title>Genome sequence of the nematode C. elegans: a platform for investigating biology.</title>
        <authorList>
            <consortium name="The C. elegans sequencing consortium"/>
        </authorList>
    </citation>
    <scope>NUCLEOTIDE SEQUENCE [LARGE SCALE GENOMIC DNA]</scope>
    <source>
        <strain evidence="10">Bristol N2</strain>
    </source>
</reference>
<reference evidence="8" key="2">
    <citation type="journal article" date="2010" name="Genes Dev.">
        <title>The homeodomain protein hmbx-1 maintains asymmetric gene expression in adult C. elegans olfactory neurons.</title>
        <authorList>
            <person name="Lesch B.J."/>
            <person name="Bargmann C.I."/>
        </authorList>
    </citation>
    <scope>FUNCTION</scope>
    <scope>SUBCELLULAR LOCATION</scope>
    <scope>TISSUE SPECIFICITY</scope>
    <scope>DISRUPTION PHENOTYPE</scope>
    <scope>DOMAIN</scope>
    <scope>MUTAGENESIS OF HIS-404</scope>
</reference>
<comment type="function">
    <text evidence="6">Transcriptional repressor which maintains cell fate asymmetry of AWC neurons in adults by repressing the expression of multiple AWC (OFF) genes, including srsx-3 in the AWC (ON) neuron.</text>
</comment>
<comment type="interaction">
    <interactant intactId="EBI-324959">
        <id>Q9TYT0</id>
    </interactant>
    <interactant intactId="EBI-2413660">
        <id>Q18097</id>
        <label>CELE_C18E9.8</label>
    </interactant>
    <organismsDiffer>false</organismsDiffer>
    <experiments>4</experiments>
</comment>
<comment type="subcellular location">
    <subcellularLocation>
        <location evidence="2 9">Nucleus</location>
    </subcellularLocation>
</comment>
<comment type="tissue specificity">
    <text evidence="6">Expressed in both AWC neurons (PubMed:20713521). Also expressed in the FLP mechanosensory neurons (PubMed:20713521).</text>
</comment>
<comment type="disruption phenotype">
    <text evidence="6">RNAi-mediated knockdown has little effect on srsx-3 expression in the AWC neuron.</text>
</comment>
<comment type="similarity">
    <text evidence="8">Belongs to the HMBOX1 homeobox family.</text>
</comment>
<feature type="chain" id="PRO_0000451153" description="Homeobox-containing protein 1">
    <location>
        <begin position="1"/>
        <end position="424"/>
    </location>
</feature>
<feature type="domain" description="HNF-p1" evidence="4">
    <location>
        <begin position="1"/>
        <end position="30"/>
    </location>
</feature>
<feature type="domain" description="POU-specific atypical" evidence="3">
    <location>
        <begin position="103"/>
        <end position="199"/>
    </location>
</feature>
<feature type="DNA-binding region" description="Homeobox" evidence="2">
    <location>
        <begin position="215"/>
        <end position="291"/>
    </location>
</feature>
<feature type="region of interest" description="Disordered" evidence="5">
    <location>
        <begin position="291"/>
        <end position="345"/>
    </location>
</feature>
<feature type="compositionally biased region" description="Low complexity" evidence="5">
    <location>
        <begin position="293"/>
        <end position="310"/>
    </location>
</feature>
<feature type="compositionally biased region" description="Polar residues" evidence="5">
    <location>
        <begin position="311"/>
        <end position="321"/>
    </location>
</feature>
<feature type="compositionally biased region" description="Polar residues" evidence="5">
    <location>
        <begin position="329"/>
        <end position="345"/>
    </location>
</feature>
<feature type="mutagenesis site" description="In ky777; expression of G protein-coupled receptor (GPCR), srsx-3, in olfactory neuron AWC (OFF) is lost after larval stage L1, but expression of GPCR str-2 in AWC(ON) is retained. Phenotype effects are more severe in older adults than in young adults." evidence="6">
    <original>H</original>
    <variation>Y</variation>
    <location>
        <position position="404"/>
    </location>
</feature>
<protein>
    <recommendedName>
        <fullName evidence="1">Homeobox-containing protein 1</fullName>
    </recommendedName>
</protein>
<name>HMBX1_CAEEL</name>